<proteinExistence type="predicted"/>
<keyword id="KW-0677">Repeat</keyword>
<sequence length="107" mass="11915">MAPPLPRTPTPTHPHSHAPPLPRTPTPAHPHSHAPPLPRTPTPTHPHSHAPPRSIQHRQGKDTKVNLYFPIDSKNPLSFLLGPTLKTRWCVVPVSFTFPLPDTDWLV</sequence>
<dbReference type="EMBL" id="J04323">
    <property type="protein sequence ID" value="AAA45800.1"/>
    <property type="molecule type" value="Genomic_DNA"/>
</dbReference>
<dbReference type="PIR" id="B33337">
    <property type="entry name" value="WMBEL2"/>
</dbReference>
<dbReference type="IntAct" id="P17589">
    <property type="interactions" value="1"/>
</dbReference>
<dbReference type="MINT" id="P17589"/>
<organismHost>
    <name type="scientific">Homo sapiens</name>
    <name type="common">Human</name>
    <dbReference type="NCBI Taxonomy" id="9606"/>
</organismHost>
<protein>
    <recommendedName>
        <fullName>Latency-related protein 2</fullName>
    </recommendedName>
</protein>
<feature type="chain" id="PRO_0000116284" description="Latency-related protein 2">
    <location>
        <begin position="1"/>
        <end position="107"/>
    </location>
</feature>
<feature type="repeat" description="1">
    <location>
        <begin position="2"/>
        <end position="17"/>
    </location>
</feature>
<feature type="repeat" description="2">
    <location>
        <begin position="18"/>
        <end position="33"/>
    </location>
</feature>
<feature type="repeat" description="3">
    <location>
        <begin position="34"/>
        <end position="49"/>
    </location>
</feature>
<feature type="region of interest" description="Disordered" evidence="1">
    <location>
        <begin position="1"/>
        <end position="63"/>
    </location>
</feature>
<feature type="region of interest" description="3 X 17 AA tandem repeats">
    <location>
        <begin position="2"/>
        <end position="49"/>
    </location>
</feature>
<feature type="compositionally biased region" description="Pro residues" evidence="1">
    <location>
        <begin position="1"/>
        <end position="44"/>
    </location>
</feature>
<feature type="compositionally biased region" description="Basic residues" evidence="1">
    <location>
        <begin position="46"/>
        <end position="58"/>
    </location>
</feature>
<organism>
    <name type="scientific">Human herpesvirus 1 (strain F)</name>
    <name type="common">HHV-1</name>
    <name type="synonym">Human herpes simplex virus 1</name>
    <dbReference type="NCBI Taxonomy" id="10304"/>
    <lineage>
        <taxon>Viruses</taxon>
        <taxon>Duplodnaviria</taxon>
        <taxon>Heunggongvirae</taxon>
        <taxon>Peploviricota</taxon>
        <taxon>Herviviricetes</taxon>
        <taxon>Herpesvirales</taxon>
        <taxon>Orthoherpesviridae</taxon>
        <taxon>Alphaherpesvirinae</taxon>
        <taxon>Simplexvirus</taxon>
        <taxon>Simplexvirus humanalpha1</taxon>
        <taxon>Human herpesvirus 1</taxon>
    </lineage>
</organism>
<evidence type="ECO:0000256" key="1">
    <source>
        <dbReference type="SAM" id="MobiDB-lite"/>
    </source>
</evidence>
<name>LRP2_HHV1F</name>
<reference key="1">
    <citation type="journal article" date="1989" name="Virology">
        <title>Sequence of the latency-related gene of herpes simplex virus type 1.</title>
        <authorList>
            <person name="Wechsler S.L."/>
            <person name="Nesburn A.B."/>
            <person name="Zwaagstra J."/>
            <person name="Ghiasi H."/>
        </authorList>
    </citation>
    <scope>NUCLEOTIDE SEQUENCE [GENOMIC DNA]</scope>
</reference>
<accession>P17589</accession>